<sequence>MGSAEKRNYVEIEGLAVAPELVEFLAKEAAPGTGVEPEKFWKGFAAIIRDLAPKNRALLAKRDELQARIDAWYKENRDKGYSQADYQQFLKDIGYLLPEGGAFSVSTTNVDPEITHIAGPQLVVPVMNARYALNAANARWGSLYDALYGTDAISEADGAEKGKGYNPKRGEKVIAWAKNFLDESAPLSTGKWADVAGLAVNDGKLEIRLTDGSATTLKDESQFKGYNGDAASPTNVLLAKHNMHVDIVINADHPIGKTDPAHIADVVLESAISTIQDCEDSIAAVDAEDKVAVYRNWLGLMNGKLEDTFEKNGKQMTRRLNGDRTYTAPDGSTLTLKGRSLMLVRNVGHLMTNPAILDAEGNEVPEGIMDAAFTSLIALHDIGPNGRHMNSREGSVYIVKPKMHGPEEVAFANEIFTRTEEMLGMKPNTLKIGIMDEERRTTVNLKEAIRAAKDRVVFINTGFLDRTGDEIHTSMEAGPMIRKGDMKQAAWIGAYEQWNVDIGLECGLSGHAQIGKGMWAMPDMMAAMLEQKIAHPKAGANTAWVPSPTAATLHATHYHKIDVAAVQEKLKSRPRAKLDDILSVPVAVRPNWTPDDIQHEIDNNAQGILGYVVRWIDQGVGCSKVPDINNVGLMEDRATLRISAQHIANWLYHGVVSEAQVMETMKRMAAIVDKQNEGDPLYRPMAADFDKSIAFQAACDLVFKGREQPNGYTEPFLHRRRLELKQAS</sequence>
<accession>A9WWC9</accession>
<reference key="1">
    <citation type="submission" date="2007-12" db="EMBL/GenBank/DDBJ databases">
        <title>Brucella suis ATCC 23445 whole genome shotgun sequencing project.</title>
        <authorList>
            <person name="Setubal J.C."/>
            <person name="Bowns C."/>
            <person name="Boyle S."/>
            <person name="Crasta O.R."/>
            <person name="Czar M.J."/>
            <person name="Dharmanolla C."/>
            <person name="Gillespie J.J."/>
            <person name="Kenyon R.W."/>
            <person name="Lu J."/>
            <person name="Mane S."/>
            <person name="Mohapatra S."/>
            <person name="Nagrani S."/>
            <person name="Purkayastha A."/>
            <person name="Rajasimha H.K."/>
            <person name="Shallom J.M."/>
            <person name="Shallom S."/>
            <person name="Shukla M."/>
            <person name="Snyder E.E."/>
            <person name="Sobral B.W."/>
            <person name="Wattam A.R."/>
            <person name="Will R."/>
            <person name="Williams K."/>
            <person name="Yoo H."/>
            <person name="Bruce D."/>
            <person name="Detter C."/>
            <person name="Munk C."/>
            <person name="Brettin T.S."/>
        </authorList>
    </citation>
    <scope>NUCLEOTIDE SEQUENCE [LARGE SCALE GENOMIC DNA]</scope>
    <source>
        <strain>ATCC 23445 / NCTC 10510</strain>
    </source>
</reference>
<name>MASZ_BRUSI</name>
<proteinExistence type="inferred from homology"/>
<feature type="chain" id="PRO_1000082699" description="Malate synthase G">
    <location>
        <begin position="1"/>
        <end position="728"/>
    </location>
</feature>
<feature type="active site" description="Proton acceptor" evidence="1">
    <location>
        <position position="345"/>
    </location>
</feature>
<feature type="active site" description="Proton donor" evidence="1">
    <location>
        <position position="636"/>
    </location>
</feature>
<feature type="binding site" evidence="1">
    <location>
        <position position="123"/>
    </location>
    <ligand>
        <name>acetyl-CoA</name>
        <dbReference type="ChEBI" id="CHEBI:57288"/>
    </ligand>
</feature>
<feature type="binding site" evidence="1">
    <location>
        <begin position="130"/>
        <end position="131"/>
    </location>
    <ligand>
        <name>acetyl-CoA</name>
        <dbReference type="ChEBI" id="CHEBI:57288"/>
    </ligand>
</feature>
<feature type="binding site" evidence="1">
    <location>
        <position position="281"/>
    </location>
    <ligand>
        <name>acetyl-CoA</name>
        <dbReference type="ChEBI" id="CHEBI:57288"/>
    </ligand>
</feature>
<feature type="binding site" evidence="1">
    <location>
        <position position="318"/>
    </location>
    <ligand>
        <name>acetyl-CoA</name>
        <dbReference type="ChEBI" id="CHEBI:57288"/>
    </ligand>
</feature>
<feature type="binding site" evidence="1">
    <location>
        <position position="345"/>
    </location>
    <ligand>
        <name>glyoxylate</name>
        <dbReference type="ChEBI" id="CHEBI:36655"/>
    </ligand>
</feature>
<feature type="binding site" evidence="1">
    <location>
        <position position="437"/>
    </location>
    <ligand>
        <name>glyoxylate</name>
        <dbReference type="ChEBI" id="CHEBI:36655"/>
    </ligand>
</feature>
<feature type="binding site" evidence="1">
    <location>
        <position position="437"/>
    </location>
    <ligand>
        <name>Mg(2+)</name>
        <dbReference type="ChEBI" id="CHEBI:18420"/>
    </ligand>
</feature>
<feature type="binding site" evidence="1">
    <location>
        <begin position="462"/>
        <end position="465"/>
    </location>
    <ligand>
        <name>glyoxylate</name>
        <dbReference type="ChEBI" id="CHEBI:36655"/>
    </ligand>
</feature>
<feature type="binding site" evidence="1">
    <location>
        <position position="465"/>
    </location>
    <ligand>
        <name>Mg(2+)</name>
        <dbReference type="ChEBI" id="CHEBI:18420"/>
    </ligand>
</feature>
<feature type="binding site" evidence="1">
    <location>
        <position position="546"/>
    </location>
    <ligand>
        <name>acetyl-CoA</name>
        <dbReference type="ChEBI" id="CHEBI:57288"/>
    </ligand>
</feature>
<feature type="modified residue" description="Cysteine sulfenic acid (-SOH)" evidence="1">
    <location>
        <position position="622"/>
    </location>
</feature>
<protein>
    <recommendedName>
        <fullName evidence="1">Malate synthase G</fullName>
        <ecNumber evidence="1">2.3.3.9</ecNumber>
    </recommendedName>
</protein>
<comment type="function">
    <text evidence="1">Involved in the glycolate utilization. Catalyzes the condensation and subsequent hydrolysis of acetyl-coenzyme A (acetyl-CoA) and glyoxylate to form malate and CoA.</text>
</comment>
<comment type="catalytic activity">
    <reaction evidence="1">
        <text>glyoxylate + acetyl-CoA + H2O = (S)-malate + CoA + H(+)</text>
        <dbReference type="Rhea" id="RHEA:18181"/>
        <dbReference type="ChEBI" id="CHEBI:15377"/>
        <dbReference type="ChEBI" id="CHEBI:15378"/>
        <dbReference type="ChEBI" id="CHEBI:15589"/>
        <dbReference type="ChEBI" id="CHEBI:36655"/>
        <dbReference type="ChEBI" id="CHEBI:57287"/>
        <dbReference type="ChEBI" id="CHEBI:57288"/>
        <dbReference type="EC" id="2.3.3.9"/>
    </reaction>
</comment>
<comment type="cofactor">
    <cofactor evidence="1">
        <name>Mg(2+)</name>
        <dbReference type="ChEBI" id="CHEBI:18420"/>
    </cofactor>
</comment>
<comment type="pathway">
    <text evidence="1">Carbohydrate metabolism; glyoxylate cycle; (S)-malate from isocitrate: step 2/2.</text>
</comment>
<comment type="subunit">
    <text evidence="1">Monomer.</text>
</comment>
<comment type="subcellular location">
    <subcellularLocation>
        <location evidence="1">Cytoplasm</location>
    </subcellularLocation>
</comment>
<comment type="similarity">
    <text evidence="1">Belongs to the malate synthase family. GlcB subfamily.</text>
</comment>
<organism>
    <name type="scientific">Brucella suis (strain ATCC 23445 / NCTC 10510)</name>
    <dbReference type="NCBI Taxonomy" id="470137"/>
    <lineage>
        <taxon>Bacteria</taxon>
        <taxon>Pseudomonadati</taxon>
        <taxon>Pseudomonadota</taxon>
        <taxon>Alphaproteobacteria</taxon>
        <taxon>Hyphomicrobiales</taxon>
        <taxon>Brucellaceae</taxon>
        <taxon>Brucella/Ochrobactrum group</taxon>
        <taxon>Brucella</taxon>
    </lineage>
</organism>
<evidence type="ECO:0000255" key="1">
    <source>
        <dbReference type="HAMAP-Rule" id="MF_00641"/>
    </source>
</evidence>
<keyword id="KW-0963">Cytoplasm</keyword>
<keyword id="KW-0329">Glyoxylate bypass</keyword>
<keyword id="KW-0460">Magnesium</keyword>
<keyword id="KW-0479">Metal-binding</keyword>
<keyword id="KW-0558">Oxidation</keyword>
<keyword id="KW-0808">Transferase</keyword>
<keyword id="KW-0816">Tricarboxylic acid cycle</keyword>
<dbReference type="EC" id="2.3.3.9" evidence="1"/>
<dbReference type="EMBL" id="CP000912">
    <property type="protein sequence ID" value="ABY40065.1"/>
    <property type="molecule type" value="Genomic_DNA"/>
</dbReference>
<dbReference type="RefSeq" id="WP_006074428.1">
    <property type="nucleotide sequence ID" value="NC_010167.1"/>
</dbReference>
<dbReference type="SMR" id="A9WWC9"/>
<dbReference type="KEGG" id="bmt:BSUIS_B1126"/>
<dbReference type="HOGENOM" id="CLU_028446_1_0_5"/>
<dbReference type="UniPathway" id="UPA00703">
    <property type="reaction ID" value="UER00720"/>
</dbReference>
<dbReference type="Proteomes" id="UP000008545">
    <property type="component" value="Chromosome II"/>
</dbReference>
<dbReference type="GO" id="GO:0005829">
    <property type="term" value="C:cytosol"/>
    <property type="evidence" value="ECO:0007669"/>
    <property type="project" value="TreeGrafter"/>
</dbReference>
<dbReference type="GO" id="GO:0000287">
    <property type="term" value="F:magnesium ion binding"/>
    <property type="evidence" value="ECO:0007669"/>
    <property type="project" value="TreeGrafter"/>
</dbReference>
<dbReference type="GO" id="GO:0004474">
    <property type="term" value="F:malate synthase activity"/>
    <property type="evidence" value="ECO:0007669"/>
    <property type="project" value="UniProtKB-UniRule"/>
</dbReference>
<dbReference type="GO" id="GO:0009436">
    <property type="term" value="P:glyoxylate catabolic process"/>
    <property type="evidence" value="ECO:0007669"/>
    <property type="project" value="TreeGrafter"/>
</dbReference>
<dbReference type="GO" id="GO:0006097">
    <property type="term" value="P:glyoxylate cycle"/>
    <property type="evidence" value="ECO:0007669"/>
    <property type="project" value="UniProtKB-UniRule"/>
</dbReference>
<dbReference type="GO" id="GO:0006099">
    <property type="term" value="P:tricarboxylic acid cycle"/>
    <property type="evidence" value="ECO:0007669"/>
    <property type="project" value="UniProtKB-KW"/>
</dbReference>
<dbReference type="CDD" id="cd00728">
    <property type="entry name" value="malate_synt_G"/>
    <property type="match status" value="1"/>
</dbReference>
<dbReference type="FunFam" id="3.20.20.360:FF:000002">
    <property type="entry name" value="Malate synthase G"/>
    <property type="match status" value="1"/>
</dbReference>
<dbReference type="Gene3D" id="3.20.20.360">
    <property type="entry name" value="Malate synthase, domain 3"/>
    <property type="match status" value="2"/>
</dbReference>
<dbReference type="Gene3D" id="1.20.1220.12">
    <property type="entry name" value="Malate synthase, domain III"/>
    <property type="match status" value="1"/>
</dbReference>
<dbReference type="HAMAP" id="MF_00641">
    <property type="entry name" value="Malate_synth_G"/>
    <property type="match status" value="1"/>
</dbReference>
<dbReference type="InterPro" id="IPR044856">
    <property type="entry name" value="Malate_synth_C_sf"/>
</dbReference>
<dbReference type="InterPro" id="IPR011076">
    <property type="entry name" value="Malate_synth_sf"/>
</dbReference>
<dbReference type="InterPro" id="IPR001465">
    <property type="entry name" value="Malate_synthase_TIM"/>
</dbReference>
<dbReference type="InterPro" id="IPR006253">
    <property type="entry name" value="Malate_synthG"/>
</dbReference>
<dbReference type="InterPro" id="IPR048355">
    <property type="entry name" value="MS_C"/>
</dbReference>
<dbReference type="InterPro" id="IPR048356">
    <property type="entry name" value="MS_N"/>
</dbReference>
<dbReference type="InterPro" id="IPR046363">
    <property type="entry name" value="MS_N_TIM-barrel_dom"/>
</dbReference>
<dbReference type="InterPro" id="IPR048357">
    <property type="entry name" value="MSG_insertion"/>
</dbReference>
<dbReference type="NCBIfam" id="TIGR01345">
    <property type="entry name" value="malate_syn_G"/>
    <property type="match status" value="1"/>
</dbReference>
<dbReference type="NCBIfam" id="NF002825">
    <property type="entry name" value="PRK02999.1"/>
    <property type="match status" value="1"/>
</dbReference>
<dbReference type="PANTHER" id="PTHR42739">
    <property type="entry name" value="MALATE SYNTHASE G"/>
    <property type="match status" value="1"/>
</dbReference>
<dbReference type="PANTHER" id="PTHR42739:SF1">
    <property type="entry name" value="MALATE SYNTHASE G"/>
    <property type="match status" value="1"/>
</dbReference>
<dbReference type="Pfam" id="PF20659">
    <property type="entry name" value="MS_C"/>
    <property type="match status" value="1"/>
</dbReference>
<dbReference type="Pfam" id="PF20656">
    <property type="entry name" value="MS_N"/>
    <property type="match status" value="1"/>
</dbReference>
<dbReference type="Pfam" id="PF01274">
    <property type="entry name" value="MS_TIM-barrel"/>
    <property type="match status" value="1"/>
</dbReference>
<dbReference type="Pfam" id="PF20658">
    <property type="entry name" value="MSG_insertion"/>
    <property type="match status" value="1"/>
</dbReference>
<dbReference type="SUPFAM" id="SSF51645">
    <property type="entry name" value="Malate synthase G"/>
    <property type="match status" value="1"/>
</dbReference>
<gene>
    <name evidence="1" type="primary">glcB</name>
    <name type="ordered locus">BSUIS_B1126</name>
</gene>